<organism>
    <name type="scientific">Cereibacter sphaeroides (strain ATCC 17025 / ATH 2.4.3)</name>
    <name type="common">Rhodobacter sphaeroides</name>
    <dbReference type="NCBI Taxonomy" id="349102"/>
    <lineage>
        <taxon>Bacteria</taxon>
        <taxon>Pseudomonadati</taxon>
        <taxon>Pseudomonadota</taxon>
        <taxon>Alphaproteobacteria</taxon>
        <taxon>Rhodobacterales</taxon>
        <taxon>Paracoccaceae</taxon>
        <taxon>Cereibacter</taxon>
    </lineage>
</organism>
<reference key="1">
    <citation type="submission" date="2007-04" db="EMBL/GenBank/DDBJ databases">
        <title>Complete sequence of chromosome of Rhodobacter sphaeroides ATCC 17025.</title>
        <authorList>
            <consortium name="US DOE Joint Genome Institute"/>
            <person name="Copeland A."/>
            <person name="Lucas S."/>
            <person name="Lapidus A."/>
            <person name="Barry K."/>
            <person name="Detter J.C."/>
            <person name="Glavina del Rio T."/>
            <person name="Hammon N."/>
            <person name="Israni S."/>
            <person name="Dalin E."/>
            <person name="Tice H."/>
            <person name="Pitluck S."/>
            <person name="Chertkov O."/>
            <person name="Brettin T."/>
            <person name="Bruce D."/>
            <person name="Han C."/>
            <person name="Schmutz J."/>
            <person name="Larimer F."/>
            <person name="Land M."/>
            <person name="Hauser L."/>
            <person name="Kyrpides N."/>
            <person name="Kim E."/>
            <person name="Richardson P."/>
            <person name="Mackenzie C."/>
            <person name="Choudhary M."/>
            <person name="Donohue T.J."/>
            <person name="Kaplan S."/>
        </authorList>
    </citation>
    <scope>NUCLEOTIDE SEQUENCE [LARGE SCALE GENOMIC DNA]</scope>
    <source>
        <strain>ATCC 17025 / ATH 2.4.3</strain>
    </source>
</reference>
<feature type="chain" id="PRO_1000056660" description="Ribosomal RNA small subunit methyltransferase A">
    <location>
        <begin position="1"/>
        <end position="278"/>
    </location>
</feature>
<feature type="binding site" evidence="1">
    <location>
        <position position="28"/>
    </location>
    <ligand>
        <name>S-adenosyl-L-methionine</name>
        <dbReference type="ChEBI" id="CHEBI:59789"/>
    </ligand>
</feature>
<feature type="binding site" evidence="1">
    <location>
        <position position="30"/>
    </location>
    <ligand>
        <name>S-adenosyl-L-methionine</name>
        <dbReference type="ChEBI" id="CHEBI:59789"/>
    </ligand>
</feature>
<feature type="binding site" evidence="1">
    <location>
        <position position="55"/>
    </location>
    <ligand>
        <name>S-adenosyl-L-methionine</name>
        <dbReference type="ChEBI" id="CHEBI:59789"/>
    </ligand>
</feature>
<feature type="binding site" evidence="1">
    <location>
        <position position="77"/>
    </location>
    <ligand>
        <name>S-adenosyl-L-methionine</name>
        <dbReference type="ChEBI" id="CHEBI:59789"/>
    </ligand>
</feature>
<feature type="binding site" evidence="1">
    <location>
        <position position="103"/>
    </location>
    <ligand>
        <name>S-adenosyl-L-methionine</name>
        <dbReference type="ChEBI" id="CHEBI:59789"/>
    </ligand>
</feature>
<feature type="binding site" evidence="1">
    <location>
        <position position="122"/>
    </location>
    <ligand>
        <name>S-adenosyl-L-methionine</name>
        <dbReference type="ChEBI" id="CHEBI:59789"/>
    </ligand>
</feature>
<sequence>MAAIDGLPPLREVIRAHGLSAKKQLGQNFLLDLNLTAKIARLAGDLKGSDVLEVGPGPGGLTRGLLAEGARRVLAIEKDARCLPALAEVAAAWPGRLEVLNADALEVDVAARLTPPIRIVANLPYNVGTELLTRWLSSGWPPFWESLTLMFQKEVAERIVARPGSKAYGRLALLSQWRTEPKIVLTLPPEAFTPPPAIHSAVVHFTRLAGPRYPADAAVLSRVTAMAFNQRRKMLRSSLKGLAPDIETVLRDAGIEPTQRAEELSLEAFCALARRVAG</sequence>
<dbReference type="EC" id="2.1.1.182" evidence="1"/>
<dbReference type="EMBL" id="CP000661">
    <property type="protein sequence ID" value="ABP70017.1"/>
    <property type="molecule type" value="Genomic_DNA"/>
</dbReference>
<dbReference type="SMR" id="A4WRK3"/>
<dbReference type="STRING" id="349102.Rsph17025_1116"/>
<dbReference type="KEGG" id="rsq:Rsph17025_1116"/>
<dbReference type="eggNOG" id="COG0030">
    <property type="taxonomic scope" value="Bacteria"/>
</dbReference>
<dbReference type="HOGENOM" id="CLU_041220_0_1_5"/>
<dbReference type="BioCyc" id="RSPH349102:G1G8M-1143-MONOMER"/>
<dbReference type="GO" id="GO:0005829">
    <property type="term" value="C:cytosol"/>
    <property type="evidence" value="ECO:0007669"/>
    <property type="project" value="TreeGrafter"/>
</dbReference>
<dbReference type="GO" id="GO:0052908">
    <property type="term" value="F:16S rRNA (adenine(1518)-N(6)/adenine(1519)-N(6))-dimethyltransferase activity"/>
    <property type="evidence" value="ECO:0007669"/>
    <property type="project" value="UniProtKB-EC"/>
</dbReference>
<dbReference type="GO" id="GO:0003723">
    <property type="term" value="F:RNA binding"/>
    <property type="evidence" value="ECO:0007669"/>
    <property type="project" value="UniProtKB-KW"/>
</dbReference>
<dbReference type="CDD" id="cd02440">
    <property type="entry name" value="AdoMet_MTases"/>
    <property type="match status" value="1"/>
</dbReference>
<dbReference type="FunFam" id="1.10.8.100:FF:000001">
    <property type="entry name" value="Ribosomal RNA small subunit methyltransferase A"/>
    <property type="match status" value="1"/>
</dbReference>
<dbReference type="Gene3D" id="1.10.8.100">
    <property type="entry name" value="Ribosomal RNA adenine dimethylase-like, domain 2"/>
    <property type="match status" value="1"/>
</dbReference>
<dbReference type="Gene3D" id="3.40.50.150">
    <property type="entry name" value="Vaccinia Virus protein VP39"/>
    <property type="match status" value="1"/>
</dbReference>
<dbReference type="HAMAP" id="MF_00607">
    <property type="entry name" value="16SrRNA_methyltr_A"/>
    <property type="match status" value="1"/>
</dbReference>
<dbReference type="InterPro" id="IPR001737">
    <property type="entry name" value="KsgA/Erm"/>
</dbReference>
<dbReference type="InterPro" id="IPR023165">
    <property type="entry name" value="rRNA_Ade_diMease-like_C"/>
</dbReference>
<dbReference type="InterPro" id="IPR020596">
    <property type="entry name" value="rRNA_Ade_Mease_Trfase_CS"/>
</dbReference>
<dbReference type="InterPro" id="IPR020598">
    <property type="entry name" value="rRNA_Ade_methylase_Trfase_N"/>
</dbReference>
<dbReference type="InterPro" id="IPR011530">
    <property type="entry name" value="rRNA_adenine_dimethylase"/>
</dbReference>
<dbReference type="InterPro" id="IPR029063">
    <property type="entry name" value="SAM-dependent_MTases_sf"/>
</dbReference>
<dbReference type="NCBIfam" id="TIGR00755">
    <property type="entry name" value="ksgA"/>
    <property type="match status" value="1"/>
</dbReference>
<dbReference type="PANTHER" id="PTHR11727">
    <property type="entry name" value="DIMETHYLADENOSINE TRANSFERASE"/>
    <property type="match status" value="1"/>
</dbReference>
<dbReference type="PANTHER" id="PTHR11727:SF7">
    <property type="entry name" value="DIMETHYLADENOSINE TRANSFERASE-RELATED"/>
    <property type="match status" value="1"/>
</dbReference>
<dbReference type="Pfam" id="PF00398">
    <property type="entry name" value="RrnaAD"/>
    <property type="match status" value="1"/>
</dbReference>
<dbReference type="SMART" id="SM00650">
    <property type="entry name" value="rADc"/>
    <property type="match status" value="1"/>
</dbReference>
<dbReference type="SUPFAM" id="SSF53335">
    <property type="entry name" value="S-adenosyl-L-methionine-dependent methyltransferases"/>
    <property type="match status" value="1"/>
</dbReference>
<dbReference type="PROSITE" id="PS01131">
    <property type="entry name" value="RRNA_A_DIMETH"/>
    <property type="match status" value="1"/>
</dbReference>
<dbReference type="PROSITE" id="PS51689">
    <property type="entry name" value="SAM_RNA_A_N6_MT"/>
    <property type="match status" value="1"/>
</dbReference>
<name>RSMA_CERS5</name>
<accession>A4WRK3</accession>
<comment type="function">
    <text evidence="1">Specifically dimethylates two adjacent adenosines (A1518 and A1519) in the loop of a conserved hairpin near the 3'-end of 16S rRNA in the 30S particle. May play a critical role in biogenesis of 30S subunits.</text>
</comment>
<comment type="catalytic activity">
    <reaction evidence="1">
        <text>adenosine(1518)/adenosine(1519) in 16S rRNA + 4 S-adenosyl-L-methionine = N(6)-dimethyladenosine(1518)/N(6)-dimethyladenosine(1519) in 16S rRNA + 4 S-adenosyl-L-homocysteine + 4 H(+)</text>
        <dbReference type="Rhea" id="RHEA:19609"/>
        <dbReference type="Rhea" id="RHEA-COMP:10232"/>
        <dbReference type="Rhea" id="RHEA-COMP:10233"/>
        <dbReference type="ChEBI" id="CHEBI:15378"/>
        <dbReference type="ChEBI" id="CHEBI:57856"/>
        <dbReference type="ChEBI" id="CHEBI:59789"/>
        <dbReference type="ChEBI" id="CHEBI:74411"/>
        <dbReference type="ChEBI" id="CHEBI:74493"/>
        <dbReference type="EC" id="2.1.1.182"/>
    </reaction>
</comment>
<comment type="subcellular location">
    <subcellularLocation>
        <location evidence="1">Cytoplasm</location>
    </subcellularLocation>
</comment>
<comment type="similarity">
    <text evidence="1">Belongs to the class I-like SAM-binding methyltransferase superfamily. rRNA adenine N(6)-methyltransferase family. RsmA subfamily.</text>
</comment>
<gene>
    <name evidence="1" type="primary">rsmA</name>
    <name evidence="1" type="synonym">ksgA</name>
    <name type="ordered locus">Rsph17025_1116</name>
</gene>
<protein>
    <recommendedName>
        <fullName evidence="1">Ribosomal RNA small subunit methyltransferase A</fullName>
        <ecNumber evidence="1">2.1.1.182</ecNumber>
    </recommendedName>
    <alternativeName>
        <fullName evidence="1">16S rRNA (adenine(1518)-N(6)/adenine(1519)-N(6))-dimethyltransferase</fullName>
    </alternativeName>
    <alternativeName>
        <fullName evidence="1">16S rRNA dimethyladenosine transferase</fullName>
    </alternativeName>
    <alternativeName>
        <fullName evidence="1">16S rRNA dimethylase</fullName>
    </alternativeName>
    <alternativeName>
        <fullName evidence="1">S-adenosylmethionine-6-N', N'-adenosyl(rRNA) dimethyltransferase</fullName>
    </alternativeName>
</protein>
<evidence type="ECO:0000255" key="1">
    <source>
        <dbReference type="HAMAP-Rule" id="MF_00607"/>
    </source>
</evidence>
<proteinExistence type="inferred from homology"/>
<keyword id="KW-0963">Cytoplasm</keyword>
<keyword id="KW-0489">Methyltransferase</keyword>
<keyword id="KW-0694">RNA-binding</keyword>
<keyword id="KW-0698">rRNA processing</keyword>
<keyword id="KW-0949">S-adenosyl-L-methionine</keyword>
<keyword id="KW-0808">Transferase</keyword>